<reference key="1">
    <citation type="journal article" date="2011" name="J. Bacteriol.">
        <title>Comparative genomics of 28 Salmonella enterica isolates: evidence for CRISPR-mediated adaptive sublineage evolution.</title>
        <authorList>
            <person name="Fricke W.F."/>
            <person name="Mammel M.K."/>
            <person name="McDermott P.F."/>
            <person name="Tartera C."/>
            <person name="White D.G."/>
            <person name="Leclerc J.E."/>
            <person name="Ravel J."/>
            <person name="Cebula T.A."/>
        </authorList>
    </citation>
    <scope>NUCLEOTIDE SEQUENCE [LARGE SCALE GENOMIC DNA]</scope>
    <source>
        <strain>SL483</strain>
    </source>
</reference>
<name>CBIN_SALA4</name>
<keyword id="KW-0997">Cell inner membrane</keyword>
<keyword id="KW-1003">Cell membrane</keyword>
<keyword id="KW-0169">Cobalamin biosynthesis</keyword>
<keyword id="KW-0170">Cobalt</keyword>
<keyword id="KW-0171">Cobalt transport</keyword>
<keyword id="KW-0406">Ion transport</keyword>
<keyword id="KW-0472">Membrane</keyword>
<keyword id="KW-0812">Transmembrane</keyword>
<keyword id="KW-1133">Transmembrane helix</keyword>
<keyword id="KW-0813">Transport</keyword>
<evidence type="ECO:0000255" key="1">
    <source>
        <dbReference type="HAMAP-Rule" id="MF_00330"/>
    </source>
</evidence>
<proteinExistence type="inferred from homology"/>
<organism>
    <name type="scientific">Salmonella agona (strain SL483)</name>
    <dbReference type="NCBI Taxonomy" id="454166"/>
    <lineage>
        <taxon>Bacteria</taxon>
        <taxon>Pseudomonadati</taxon>
        <taxon>Pseudomonadota</taxon>
        <taxon>Gammaproteobacteria</taxon>
        <taxon>Enterobacterales</taxon>
        <taxon>Enterobacteriaceae</taxon>
        <taxon>Salmonella</taxon>
    </lineage>
</organism>
<dbReference type="EMBL" id="CP001138">
    <property type="protein sequence ID" value="ACH50057.1"/>
    <property type="molecule type" value="Genomic_DNA"/>
</dbReference>
<dbReference type="RefSeq" id="WP_000753212.1">
    <property type="nucleotide sequence ID" value="NC_011149.1"/>
</dbReference>
<dbReference type="KEGG" id="sea:SeAg_B2144"/>
<dbReference type="HOGENOM" id="CLU_136197_2_0_6"/>
<dbReference type="UniPathway" id="UPA00148"/>
<dbReference type="Proteomes" id="UP000008819">
    <property type="component" value="Chromosome"/>
</dbReference>
<dbReference type="GO" id="GO:0005886">
    <property type="term" value="C:plasma membrane"/>
    <property type="evidence" value="ECO:0007669"/>
    <property type="project" value="UniProtKB-SubCell"/>
</dbReference>
<dbReference type="GO" id="GO:0015087">
    <property type="term" value="F:cobalt ion transmembrane transporter activity"/>
    <property type="evidence" value="ECO:0007669"/>
    <property type="project" value="UniProtKB-UniRule"/>
</dbReference>
<dbReference type="GO" id="GO:0009236">
    <property type="term" value="P:cobalamin biosynthetic process"/>
    <property type="evidence" value="ECO:0007669"/>
    <property type="project" value="UniProtKB-UniRule"/>
</dbReference>
<dbReference type="HAMAP" id="MF_00330">
    <property type="entry name" value="CbiN"/>
    <property type="match status" value="1"/>
</dbReference>
<dbReference type="InterPro" id="IPR003705">
    <property type="entry name" value="CbiN"/>
</dbReference>
<dbReference type="NCBIfam" id="TIGR01165">
    <property type="entry name" value="cbiN"/>
    <property type="match status" value="1"/>
</dbReference>
<dbReference type="NCBIfam" id="NF002780">
    <property type="entry name" value="PRK02898.1"/>
    <property type="match status" value="1"/>
</dbReference>
<dbReference type="PANTHER" id="PTHR38662">
    <property type="entry name" value="COBALT TRANSPORT PROTEIN CBIN"/>
    <property type="match status" value="1"/>
</dbReference>
<dbReference type="PANTHER" id="PTHR38662:SF1">
    <property type="entry name" value="COBALT TRANSPORT PROTEIN CBIN"/>
    <property type="match status" value="1"/>
</dbReference>
<dbReference type="Pfam" id="PF02553">
    <property type="entry name" value="CbiN"/>
    <property type="match status" value="1"/>
</dbReference>
<gene>
    <name evidence="1" type="primary">cbiN</name>
    <name type="ordered locus">SeAg_B2144</name>
</gene>
<sequence length="93" mass="10269">MKKTLMLLAMVVALVILPFFINHGGEYGGSDGEAESQIQAIAPQYKPWFQPLYEPASGEIESLLFTLQGSLGAAVIFYILGYCKGKQRRDDRA</sequence>
<comment type="function">
    <text evidence="1">Part of the energy-coupling factor (ECF) transporter complex CbiMNOQ involved in cobalt import.</text>
</comment>
<comment type="pathway">
    <text evidence="1">Cofactor biosynthesis; adenosylcobalamin biosynthesis.</text>
</comment>
<comment type="subunit">
    <text evidence="1">Forms an energy-coupling factor (ECF) transporter complex composed of an ATP-binding protein (A component, CbiO), a transmembrane protein (T component, CbiQ) and 2 possible substrate-capture proteins (S components, CbiM and CbiN) of unknown stoichimetry.</text>
</comment>
<comment type="subcellular location">
    <subcellularLocation>
        <location evidence="1">Cell inner membrane</location>
        <topology evidence="1">Multi-pass membrane protein</topology>
    </subcellularLocation>
</comment>
<comment type="similarity">
    <text evidence="1">Belongs to the CbiN family.</text>
</comment>
<accession>B5EWY8</accession>
<feature type="chain" id="PRO_1000116109" description="Cobalt transport protein CbiN">
    <location>
        <begin position="1"/>
        <end position="93"/>
    </location>
</feature>
<feature type="transmembrane region" description="Helical" evidence="1">
    <location>
        <begin position="5"/>
        <end position="25"/>
    </location>
</feature>
<feature type="transmembrane region" description="Helical" evidence="1">
    <location>
        <begin position="63"/>
        <end position="83"/>
    </location>
</feature>
<protein>
    <recommendedName>
        <fullName evidence="1">Cobalt transport protein CbiN</fullName>
    </recommendedName>
    <alternativeName>
        <fullName evidence="1">Energy-coupling factor transporter probable substrate-capture protein CbiN</fullName>
        <shortName evidence="1">ECF transporter S component CbiN</shortName>
    </alternativeName>
</protein>